<accession>B8DBV7</accession>
<organism>
    <name type="scientific">Listeria monocytogenes serotype 4a (strain HCC23)</name>
    <dbReference type="NCBI Taxonomy" id="552536"/>
    <lineage>
        <taxon>Bacteria</taxon>
        <taxon>Bacillati</taxon>
        <taxon>Bacillota</taxon>
        <taxon>Bacilli</taxon>
        <taxon>Bacillales</taxon>
        <taxon>Listeriaceae</taxon>
        <taxon>Listeria</taxon>
    </lineage>
</organism>
<sequence>MDTSRKIIHIDMDAFYASVEQRDHPEFRGKPLIIGGDPNKRGVVSTCSYEARKYGVHSAMPTRQAAKLCPNGIFIHGNMAHYVEVSSQIREIFSRYTDVIEPLSLDEAYLDVTENKKGMKSATMVARDIQQTIYRELGLTASAGVSFNKFIAKIASDFKKPAGITVVAPEEAEAFLEQIPVTKFYGVGKVTAEKLHRLGIETGADLKKWSEWDLIRELHKHGYQLYRHVRGRSNNIVNPHRDRKSVGKETTFEFNVLDNRILEQSLMKFAKKVEERLIKLQKHGKTVVLKLRYSDFTTITKRLTLNEYTNDANQIYQAAALLLRESYKGQDSIRLIGLTVTNLKPVYFENLRLEGL</sequence>
<proteinExistence type="inferred from homology"/>
<evidence type="ECO:0000255" key="1">
    <source>
        <dbReference type="HAMAP-Rule" id="MF_01113"/>
    </source>
</evidence>
<protein>
    <recommendedName>
        <fullName evidence="1">DNA polymerase IV</fullName>
        <shortName evidence="1">Pol IV</shortName>
        <ecNumber evidence="1">2.7.7.7</ecNumber>
    </recommendedName>
</protein>
<name>DPO4_LISMH</name>
<gene>
    <name evidence="1" type="primary">dinB</name>
    <name type="ordered locus">LMHCC_0586</name>
</gene>
<feature type="chain" id="PRO_1000213590" description="DNA polymerase IV">
    <location>
        <begin position="1"/>
        <end position="356"/>
    </location>
</feature>
<feature type="domain" description="UmuC" evidence="1">
    <location>
        <begin position="7"/>
        <end position="188"/>
    </location>
</feature>
<feature type="active site" evidence="1">
    <location>
        <position position="107"/>
    </location>
</feature>
<feature type="binding site" evidence="1">
    <location>
        <position position="11"/>
    </location>
    <ligand>
        <name>Mg(2+)</name>
        <dbReference type="ChEBI" id="CHEBI:18420"/>
    </ligand>
</feature>
<feature type="binding site" evidence="1">
    <location>
        <position position="106"/>
    </location>
    <ligand>
        <name>Mg(2+)</name>
        <dbReference type="ChEBI" id="CHEBI:18420"/>
    </ligand>
</feature>
<feature type="site" description="Substrate discrimination" evidence="1">
    <location>
        <position position="16"/>
    </location>
</feature>
<comment type="function">
    <text evidence="1">Poorly processive, error-prone DNA polymerase involved in untargeted mutagenesis. Copies undamaged DNA at stalled replication forks, which arise in vivo from mismatched or misaligned primer ends. These misaligned primers can be extended by PolIV. Exhibits no 3'-5' exonuclease (proofreading) activity. May be involved in translesional synthesis, in conjunction with the beta clamp from PolIII.</text>
</comment>
<comment type="catalytic activity">
    <reaction evidence="1">
        <text>DNA(n) + a 2'-deoxyribonucleoside 5'-triphosphate = DNA(n+1) + diphosphate</text>
        <dbReference type="Rhea" id="RHEA:22508"/>
        <dbReference type="Rhea" id="RHEA-COMP:17339"/>
        <dbReference type="Rhea" id="RHEA-COMP:17340"/>
        <dbReference type="ChEBI" id="CHEBI:33019"/>
        <dbReference type="ChEBI" id="CHEBI:61560"/>
        <dbReference type="ChEBI" id="CHEBI:173112"/>
        <dbReference type="EC" id="2.7.7.7"/>
    </reaction>
</comment>
<comment type="cofactor">
    <cofactor evidence="1">
        <name>Mg(2+)</name>
        <dbReference type="ChEBI" id="CHEBI:18420"/>
    </cofactor>
    <text evidence="1">Binds 2 magnesium ions per subunit.</text>
</comment>
<comment type="subunit">
    <text evidence="1">Monomer.</text>
</comment>
<comment type="subcellular location">
    <subcellularLocation>
        <location evidence="1">Cytoplasm</location>
    </subcellularLocation>
</comment>
<comment type="similarity">
    <text evidence="1">Belongs to the DNA polymerase type-Y family.</text>
</comment>
<keyword id="KW-0963">Cytoplasm</keyword>
<keyword id="KW-0227">DNA damage</keyword>
<keyword id="KW-0234">DNA repair</keyword>
<keyword id="KW-0235">DNA replication</keyword>
<keyword id="KW-0238">DNA-binding</keyword>
<keyword id="KW-0239">DNA-directed DNA polymerase</keyword>
<keyword id="KW-0460">Magnesium</keyword>
<keyword id="KW-0479">Metal-binding</keyword>
<keyword id="KW-0515">Mutator protein</keyword>
<keyword id="KW-0548">Nucleotidyltransferase</keyword>
<keyword id="KW-0808">Transferase</keyword>
<dbReference type="EC" id="2.7.7.7" evidence="1"/>
<dbReference type="EMBL" id="CP001175">
    <property type="protein sequence ID" value="ACK38943.1"/>
    <property type="molecule type" value="Genomic_DNA"/>
</dbReference>
<dbReference type="RefSeq" id="WP_012581042.1">
    <property type="nucleotide sequence ID" value="NC_011660.1"/>
</dbReference>
<dbReference type="SMR" id="B8DBV7"/>
<dbReference type="KEGG" id="lmh:LMHCC_0586"/>
<dbReference type="HOGENOM" id="CLU_012348_1_2_9"/>
<dbReference type="GO" id="GO:0005829">
    <property type="term" value="C:cytosol"/>
    <property type="evidence" value="ECO:0007669"/>
    <property type="project" value="TreeGrafter"/>
</dbReference>
<dbReference type="GO" id="GO:0003684">
    <property type="term" value="F:damaged DNA binding"/>
    <property type="evidence" value="ECO:0007669"/>
    <property type="project" value="InterPro"/>
</dbReference>
<dbReference type="GO" id="GO:0003887">
    <property type="term" value="F:DNA-directed DNA polymerase activity"/>
    <property type="evidence" value="ECO:0007669"/>
    <property type="project" value="UniProtKB-UniRule"/>
</dbReference>
<dbReference type="GO" id="GO:0000287">
    <property type="term" value="F:magnesium ion binding"/>
    <property type="evidence" value="ECO:0007669"/>
    <property type="project" value="UniProtKB-UniRule"/>
</dbReference>
<dbReference type="GO" id="GO:0006261">
    <property type="term" value="P:DNA-templated DNA replication"/>
    <property type="evidence" value="ECO:0007669"/>
    <property type="project" value="UniProtKB-UniRule"/>
</dbReference>
<dbReference type="GO" id="GO:0042276">
    <property type="term" value="P:error-prone translesion synthesis"/>
    <property type="evidence" value="ECO:0007669"/>
    <property type="project" value="TreeGrafter"/>
</dbReference>
<dbReference type="GO" id="GO:0009432">
    <property type="term" value="P:SOS response"/>
    <property type="evidence" value="ECO:0007669"/>
    <property type="project" value="TreeGrafter"/>
</dbReference>
<dbReference type="CDD" id="cd03586">
    <property type="entry name" value="PolY_Pol_IV_kappa"/>
    <property type="match status" value="1"/>
</dbReference>
<dbReference type="FunFam" id="1.10.150.20:FF:000062">
    <property type="entry name" value="DNA polymerase IV"/>
    <property type="match status" value="1"/>
</dbReference>
<dbReference type="FunFam" id="3.30.1490.100:FF:000004">
    <property type="entry name" value="DNA polymerase IV"/>
    <property type="match status" value="1"/>
</dbReference>
<dbReference type="FunFam" id="3.30.70.270:FF:000002">
    <property type="entry name" value="DNA polymerase IV"/>
    <property type="match status" value="1"/>
</dbReference>
<dbReference type="FunFam" id="3.40.1170.60:FF:000001">
    <property type="entry name" value="DNA polymerase IV"/>
    <property type="match status" value="1"/>
</dbReference>
<dbReference type="Gene3D" id="3.30.70.270">
    <property type="match status" value="1"/>
</dbReference>
<dbReference type="Gene3D" id="3.40.1170.60">
    <property type="match status" value="1"/>
</dbReference>
<dbReference type="Gene3D" id="1.10.150.20">
    <property type="entry name" value="5' to 3' exonuclease, C-terminal subdomain"/>
    <property type="match status" value="1"/>
</dbReference>
<dbReference type="Gene3D" id="3.30.1490.100">
    <property type="entry name" value="DNA polymerase, Y-family, little finger domain"/>
    <property type="match status" value="1"/>
</dbReference>
<dbReference type="HAMAP" id="MF_01113">
    <property type="entry name" value="DNApol_IV"/>
    <property type="match status" value="1"/>
</dbReference>
<dbReference type="InterPro" id="IPR043502">
    <property type="entry name" value="DNA/RNA_pol_sf"/>
</dbReference>
<dbReference type="InterPro" id="IPR036775">
    <property type="entry name" value="DNA_pol_Y-fam_lit_finger_sf"/>
</dbReference>
<dbReference type="InterPro" id="IPR017961">
    <property type="entry name" value="DNA_pol_Y-fam_little_finger"/>
</dbReference>
<dbReference type="InterPro" id="IPR050116">
    <property type="entry name" value="DNA_polymerase-Y"/>
</dbReference>
<dbReference type="InterPro" id="IPR022880">
    <property type="entry name" value="DNApol_IV"/>
</dbReference>
<dbReference type="InterPro" id="IPR024728">
    <property type="entry name" value="PolY_HhH_motif"/>
</dbReference>
<dbReference type="InterPro" id="IPR043128">
    <property type="entry name" value="Rev_trsase/Diguanyl_cyclase"/>
</dbReference>
<dbReference type="InterPro" id="IPR001126">
    <property type="entry name" value="UmuC"/>
</dbReference>
<dbReference type="NCBIfam" id="NF002677">
    <property type="entry name" value="PRK02406.1"/>
    <property type="match status" value="1"/>
</dbReference>
<dbReference type="NCBIfam" id="NF010731">
    <property type="entry name" value="PRK14133.1"/>
    <property type="match status" value="1"/>
</dbReference>
<dbReference type="PANTHER" id="PTHR11076:SF33">
    <property type="entry name" value="DNA POLYMERASE KAPPA"/>
    <property type="match status" value="1"/>
</dbReference>
<dbReference type="PANTHER" id="PTHR11076">
    <property type="entry name" value="DNA REPAIR POLYMERASE UMUC / TRANSFERASE FAMILY MEMBER"/>
    <property type="match status" value="1"/>
</dbReference>
<dbReference type="Pfam" id="PF00817">
    <property type="entry name" value="IMS"/>
    <property type="match status" value="1"/>
</dbReference>
<dbReference type="Pfam" id="PF11799">
    <property type="entry name" value="IMS_C"/>
    <property type="match status" value="1"/>
</dbReference>
<dbReference type="Pfam" id="PF11798">
    <property type="entry name" value="IMS_HHH"/>
    <property type="match status" value="1"/>
</dbReference>
<dbReference type="SUPFAM" id="SSF56672">
    <property type="entry name" value="DNA/RNA polymerases"/>
    <property type="match status" value="1"/>
</dbReference>
<dbReference type="SUPFAM" id="SSF100879">
    <property type="entry name" value="Lesion bypass DNA polymerase (Y-family), little finger domain"/>
    <property type="match status" value="1"/>
</dbReference>
<dbReference type="PROSITE" id="PS50173">
    <property type="entry name" value="UMUC"/>
    <property type="match status" value="1"/>
</dbReference>
<reference key="1">
    <citation type="journal article" date="2011" name="J. Bacteriol.">
        <title>Genome sequence of lineage III Listeria monocytogenes strain HCC23.</title>
        <authorList>
            <person name="Steele C.L."/>
            <person name="Donaldson J.R."/>
            <person name="Paul D."/>
            <person name="Banes M.M."/>
            <person name="Arick T."/>
            <person name="Bridges S.M."/>
            <person name="Lawrence M.L."/>
        </authorList>
    </citation>
    <scope>NUCLEOTIDE SEQUENCE [LARGE SCALE GENOMIC DNA]</scope>
    <source>
        <strain>HCC23</strain>
    </source>
</reference>